<keyword id="KW-0066">ATP synthesis</keyword>
<keyword id="KW-0139">CF(1)</keyword>
<keyword id="KW-0150">Chloroplast</keyword>
<keyword id="KW-0375">Hydrogen ion transport</keyword>
<keyword id="KW-0406">Ion transport</keyword>
<keyword id="KW-0472">Membrane</keyword>
<keyword id="KW-0934">Plastid</keyword>
<keyword id="KW-0793">Thylakoid</keyword>
<keyword id="KW-0813">Transport</keyword>
<dbReference type="EMBL" id="D10997">
    <property type="protein sequence ID" value="BAA01768.1"/>
    <property type="molecule type" value="Genomic_DNA"/>
</dbReference>
<dbReference type="EMBL" id="AB001684">
    <property type="protein sequence ID" value="BAA57981.1"/>
    <property type="molecule type" value="Genomic_DNA"/>
</dbReference>
<dbReference type="PIR" id="T07333">
    <property type="entry name" value="T07333"/>
</dbReference>
<dbReference type="RefSeq" id="NP_045905.1">
    <property type="nucleotide sequence ID" value="NC_001865.1"/>
</dbReference>
<dbReference type="SMR" id="P32979"/>
<dbReference type="GeneID" id="809135"/>
<dbReference type="GO" id="GO:0009535">
    <property type="term" value="C:chloroplast thylakoid membrane"/>
    <property type="evidence" value="ECO:0007669"/>
    <property type="project" value="UniProtKB-SubCell"/>
</dbReference>
<dbReference type="GO" id="GO:0045259">
    <property type="term" value="C:proton-transporting ATP synthase complex"/>
    <property type="evidence" value="ECO:0007669"/>
    <property type="project" value="UniProtKB-KW"/>
</dbReference>
<dbReference type="GO" id="GO:0005524">
    <property type="term" value="F:ATP binding"/>
    <property type="evidence" value="ECO:0007669"/>
    <property type="project" value="UniProtKB-UniRule"/>
</dbReference>
<dbReference type="GO" id="GO:0046933">
    <property type="term" value="F:proton-transporting ATP synthase activity, rotational mechanism"/>
    <property type="evidence" value="ECO:0007669"/>
    <property type="project" value="UniProtKB-UniRule"/>
</dbReference>
<dbReference type="CDD" id="cd12152">
    <property type="entry name" value="F1-ATPase_delta"/>
    <property type="match status" value="1"/>
</dbReference>
<dbReference type="Gene3D" id="6.10.140.480">
    <property type="match status" value="1"/>
</dbReference>
<dbReference type="Gene3D" id="2.60.15.10">
    <property type="entry name" value="F0F1 ATP synthase delta/epsilon subunit, N-terminal"/>
    <property type="match status" value="1"/>
</dbReference>
<dbReference type="HAMAP" id="MF_00530">
    <property type="entry name" value="ATP_synth_epsil_bac"/>
    <property type="match status" value="1"/>
</dbReference>
<dbReference type="InterPro" id="IPR001469">
    <property type="entry name" value="ATP_synth_F1_dsu/esu"/>
</dbReference>
<dbReference type="InterPro" id="IPR020546">
    <property type="entry name" value="ATP_synth_F1_dsu/esu_N"/>
</dbReference>
<dbReference type="InterPro" id="IPR020547">
    <property type="entry name" value="ATP_synth_F1_esu_C"/>
</dbReference>
<dbReference type="InterPro" id="IPR036771">
    <property type="entry name" value="ATPsynth_dsu/esu_N"/>
</dbReference>
<dbReference type="NCBIfam" id="TIGR01216">
    <property type="entry name" value="ATP_synt_epsi"/>
    <property type="match status" value="1"/>
</dbReference>
<dbReference type="PANTHER" id="PTHR13822">
    <property type="entry name" value="ATP SYNTHASE DELTA/EPSILON CHAIN"/>
    <property type="match status" value="1"/>
</dbReference>
<dbReference type="PANTHER" id="PTHR13822:SF10">
    <property type="entry name" value="ATP SYNTHASE EPSILON CHAIN, CHLOROPLASTIC"/>
    <property type="match status" value="1"/>
</dbReference>
<dbReference type="Pfam" id="PF00401">
    <property type="entry name" value="ATP-synt_DE"/>
    <property type="match status" value="1"/>
</dbReference>
<dbReference type="Pfam" id="PF02823">
    <property type="entry name" value="ATP-synt_DE_N"/>
    <property type="match status" value="1"/>
</dbReference>
<dbReference type="SUPFAM" id="SSF51344">
    <property type="entry name" value="Epsilon subunit of F1F0-ATP synthase N-terminal domain"/>
    <property type="match status" value="1"/>
</dbReference>
<geneLocation type="chloroplast"/>
<accession>P32979</accession>
<comment type="function">
    <text evidence="1">Produces ATP from ADP in the presence of a proton gradient across the membrane.</text>
</comment>
<comment type="subunit">
    <text evidence="1">F-type ATPases have 2 components, CF(1) - the catalytic core - and CF(0) - the membrane proton channel. CF(1) has five subunits: alpha(3), beta(3), gamma(1), delta(1), epsilon(1). CF(0) has three main subunits: a, b and c.</text>
</comment>
<comment type="subcellular location">
    <subcellularLocation>
        <location evidence="1">Plastid</location>
        <location evidence="1">Chloroplast thylakoid membrane</location>
        <topology evidence="1">Peripheral membrane protein</topology>
    </subcellularLocation>
</comment>
<comment type="similarity">
    <text evidence="1">Belongs to the ATPase epsilon chain family.</text>
</comment>
<name>ATPE_CHLVU</name>
<protein>
    <recommendedName>
        <fullName evidence="1">ATP synthase epsilon chain, chloroplastic</fullName>
    </recommendedName>
    <alternativeName>
        <fullName evidence="1">ATP synthase F1 sector epsilon subunit</fullName>
    </alternativeName>
    <alternativeName>
        <fullName evidence="1">F-ATPase epsilon subunit</fullName>
    </alternativeName>
</protein>
<reference key="1">
    <citation type="journal article" date="1992" name="Life Sci. Adv. (Genet.)">
        <title>Gene organization in Chlorella chloroplast genome is peculiar but suggests common lineage with land plants.</title>
        <authorList>
            <person name="Yoshinaga K."/>
            <person name="Iwasaki H."/>
            <person name="Sasaki T."/>
        </authorList>
    </citation>
    <scope>NUCLEOTIDE SEQUENCE [GENOMIC DNA]</scope>
    <source>
        <strain>IAM C-27 / Tamiya</strain>
    </source>
</reference>
<reference key="2">
    <citation type="journal article" date="1997" name="Proc. Natl. Acad. Sci. U.S.A.">
        <title>Complete nucleotide sequence of the chloroplast genome from the green alga Chlorella vulgaris: the existence of genes possibly involved in chloroplast division.</title>
        <authorList>
            <person name="Wakasugi T."/>
            <person name="Nagai T."/>
            <person name="Kapoor M."/>
            <person name="Sugita M."/>
            <person name="Ito M."/>
            <person name="Ito S."/>
            <person name="Tsudzuki J."/>
            <person name="Nakashima K."/>
            <person name="Tsudzuki T."/>
            <person name="Suzuki Y."/>
            <person name="Hamada A."/>
            <person name="Ohta T."/>
            <person name="Inamura A."/>
            <person name="Yoshinaga K."/>
            <person name="Sugiura M."/>
        </authorList>
    </citation>
    <scope>NUCLEOTIDE SEQUENCE [LARGE SCALE GENOMIC DNA]</scope>
    <source>
        <strain>IAM C-27 / Tamiya</strain>
    </source>
</reference>
<organism>
    <name type="scientific">Chlorella vulgaris</name>
    <name type="common">Green alga</name>
    <dbReference type="NCBI Taxonomy" id="3077"/>
    <lineage>
        <taxon>Eukaryota</taxon>
        <taxon>Viridiplantae</taxon>
        <taxon>Chlorophyta</taxon>
        <taxon>core chlorophytes</taxon>
        <taxon>Trebouxiophyceae</taxon>
        <taxon>Chlorellales</taxon>
        <taxon>Chlorellaceae</taxon>
        <taxon>Chlorella clade</taxon>
        <taxon>Chlorella</taxon>
    </lineage>
</organism>
<feature type="chain" id="PRO_0000188259" description="ATP synthase epsilon chain, chloroplastic">
    <location>
        <begin position="1"/>
        <end position="134"/>
    </location>
</feature>
<proteinExistence type="inferred from homology"/>
<sequence length="134" mass="14843">MTLQVCIMTPDRIFWNDQADEIILPTNTGQMGVLTNHAPLITALDIGVTLIRSNSNWNPVALMGGFALVKQNQVTILVNEAESAQTIGVDEAEIAFQEAKTKLEQSQGEKQRVEATFVFKRARARYQVVKQLGV</sequence>
<gene>
    <name evidence="1" type="primary">atpE</name>
</gene>
<evidence type="ECO:0000255" key="1">
    <source>
        <dbReference type="HAMAP-Rule" id="MF_00530"/>
    </source>
</evidence>